<reference key="1">
    <citation type="submission" date="2003-10" db="EMBL/GenBank/DDBJ databases">
        <title>The complete genome sequence of the alkaliphilic Bacillus clausii KSM-K16.</title>
        <authorList>
            <person name="Takaki Y."/>
            <person name="Kageyama Y."/>
            <person name="Shimamura S."/>
            <person name="Suzuki H."/>
            <person name="Nishi S."/>
            <person name="Hatada Y."/>
            <person name="Kawai S."/>
            <person name="Ito S."/>
            <person name="Horikoshi K."/>
        </authorList>
    </citation>
    <scope>NUCLEOTIDE SEQUENCE [LARGE SCALE GENOMIC DNA]</scope>
    <source>
        <strain>KSM-K16</strain>
    </source>
</reference>
<keyword id="KW-1003">Cell membrane</keyword>
<keyword id="KW-0342">GTP-binding</keyword>
<keyword id="KW-0378">Hydrolase</keyword>
<keyword id="KW-0472">Membrane</keyword>
<keyword id="KW-0547">Nucleotide-binding</keyword>
<keyword id="KW-0648">Protein biosynthesis</keyword>
<keyword id="KW-1185">Reference proteome</keyword>
<evidence type="ECO:0000255" key="1">
    <source>
        <dbReference type="HAMAP-Rule" id="MF_00071"/>
    </source>
</evidence>
<organism>
    <name type="scientific">Shouchella clausii (strain KSM-K16)</name>
    <name type="common">Alkalihalobacillus clausii</name>
    <dbReference type="NCBI Taxonomy" id="66692"/>
    <lineage>
        <taxon>Bacteria</taxon>
        <taxon>Bacillati</taxon>
        <taxon>Bacillota</taxon>
        <taxon>Bacilli</taxon>
        <taxon>Bacillales</taxon>
        <taxon>Bacillaceae</taxon>
        <taxon>Shouchella</taxon>
    </lineage>
</organism>
<gene>
    <name evidence="1" type="primary">lepA</name>
    <name type="ordered locus">ABC1655</name>
</gene>
<protein>
    <recommendedName>
        <fullName evidence="1">Elongation factor 4</fullName>
        <shortName evidence="1">EF-4</shortName>
        <ecNumber evidence="1">3.6.5.n1</ecNumber>
    </recommendedName>
    <alternativeName>
        <fullName evidence="1">Ribosomal back-translocase LepA</fullName>
    </alternativeName>
</protein>
<name>LEPA_SHOC1</name>
<dbReference type="EC" id="3.6.5.n1" evidence="1"/>
<dbReference type="EMBL" id="AP006627">
    <property type="protein sequence ID" value="BAD64190.1"/>
    <property type="molecule type" value="Genomic_DNA"/>
</dbReference>
<dbReference type="RefSeq" id="WP_011246499.1">
    <property type="nucleotide sequence ID" value="NC_006582.1"/>
</dbReference>
<dbReference type="SMR" id="Q5WHG5"/>
<dbReference type="STRING" id="66692.ABC1655"/>
<dbReference type="KEGG" id="bcl:ABC1655"/>
<dbReference type="eggNOG" id="COG0481">
    <property type="taxonomic scope" value="Bacteria"/>
</dbReference>
<dbReference type="HOGENOM" id="CLU_009995_3_3_9"/>
<dbReference type="OrthoDB" id="9804431at2"/>
<dbReference type="Proteomes" id="UP000001168">
    <property type="component" value="Chromosome"/>
</dbReference>
<dbReference type="GO" id="GO:0005886">
    <property type="term" value="C:plasma membrane"/>
    <property type="evidence" value="ECO:0007669"/>
    <property type="project" value="UniProtKB-SubCell"/>
</dbReference>
<dbReference type="GO" id="GO:0005525">
    <property type="term" value="F:GTP binding"/>
    <property type="evidence" value="ECO:0007669"/>
    <property type="project" value="UniProtKB-UniRule"/>
</dbReference>
<dbReference type="GO" id="GO:0003924">
    <property type="term" value="F:GTPase activity"/>
    <property type="evidence" value="ECO:0007669"/>
    <property type="project" value="UniProtKB-UniRule"/>
</dbReference>
<dbReference type="GO" id="GO:0043022">
    <property type="term" value="F:ribosome binding"/>
    <property type="evidence" value="ECO:0007669"/>
    <property type="project" value="UniProtKB-UniRule"/>
</dbReference>
<dbReference type="GO" id="GO:0003746">
    <property type="term" value="F:translation elongation factor activity"/>
    <property type="evidence" value="ECO:0007669"/>
    <property type="project" value="UniProtKB-UniRule"/>
</dbReference>
<dbReference type="GO" id="GO:0045727">
    <property type="term" value="P:positive regulation of translation"/>
    <property type="evidence" value="ECO:0007669"/>
    <property type="project" value="UniProtKB-UniRule"/>
</dbReference>
<dbReference type="CDD" id="cd03699">
    <property type="entry name" value="EF4_II"/>
    <property type="match status" value="1"/>
</dbReference>
<dbReference type="CDD" id="cd16260">
    <property type="entry name" value="EF4_III"/>
    <property type="match status" value="1"/>
</dbReference>
<dbReference type="CDD" id="cd01890">
    <property type="entry name" value="LepA"/>
    <property type="match status" value="1"/>
</dbReference>
<dbReference type="CDD" id="cd03709">
    <property type="entry name" value="lepA_C"/>
    <property type="match status" value="1"/>
</dbReference>
<dbReference type="FunFam" id="3.40.50.300:FF:000078">
    <property type="entry name" value="Elongation factor 4"/>
    <property type="match status" value="1"/>
</dbReference>
<dbReference type="FunFam" id="2.40.30.10:FF:000015">
    <property type="entry name" value="Translation factor GUF1, mitochondrial"/>
    <property type="match status" value="1"/>
</dbReference>
<dbReference type="FunFam" id="3.30.70.240:FF:000007">
    <property type="entry name" value="Translation factor GUF1, mitochondrial"/>
    <property type="match status" value="1"/>
</dbReference>
<dbReference type="FunFam" id="3.30.70.2570:FF:000001">
    <property type="entry name" value="Translation factor GUF1, mitochondrial"/>
    <property type="match status" value="1"/>
</dbReference>
<dbReference type="FunFam" id="3.30.70.870:FF:000004">
    <property type="entry name" value="Translation factor GUF1, mitochondrial"/>
    <property type="match status" value="1"/>
</dbReference>
<dbReference type="Gene3D" id="3.30.70.240">
    <property type="match status" value="1"/>
</dbReference>
<dbReference type="Gene3D" id="3.30.70.2570">
    <property type="entry name" value="Elongation factor 4, C-terminal domain"/>
    <property type="match status" value="1"/>
</dbReference>
<dbReference type="Gene3D" id="3.30.70.870">
    <property type="entry name" value="Elongation Factor G (Translational Gtpase), domain 3"/>
    <property type="match status" value="1"/>
</dbReference>
<dbReference type="Gene3D" id="3.40.50.300">
    <property type="entry name" value="P-loop containing nucleotide triphosphate hydrolases"/>
    <property type="match status" value="1"/>
</dbReference>
<dbReference type="Gene3D" id="2.40.30.10">
    <property type="entry name" value="Translation factors"/>
    <property type="match status" value="1"/>
</dbReference>
<dbReference type="HAMAP" id="MF_00071">
    <property type="entry name" value="LepA"/>
    <property type="match status" value="1"/>
</dbReference>
<dbReference type="InterPro" id="IPR006297">
    <property type="entry name" value="EF-4"/>
</dbReference>
<dbReference type="InterPro" id="IPR035647">
    <property type="entry name" value="EFG_III/V"/>
</dbReference>
<dbReference type="InterPro" id="IPR000640">
    <property type="entry name" value="EFG_V-like"/>
</dbReference>
<dbReference type="InterPro" id="IPR004161">
    <property type="entry name" value="EFTu-like_2"/>
</dbReference>
<dbReference type="InterPro" id="IPR031157">
    <property type="entry name" value="G_TR_CS"/>
</dbReference>
<dbReference type="InterPro" id="IPR038363">
    <property type="entry name" value="LepA_C_sf"/>
</dbReference>
<dbReference type="InterPro" id="IPR013842">
    <property type="entry name" value="LepA_CTD"/>
</dbReference>
<dbReference type="InterPro" id="IPR035654">
    <property type="entry name" value="LepA_IV"/>
</dbReference>
<dbReference type="InterPro" id="IPR027417">
    <property type="entry name" value="P-loop_NTPase"/>
</dbReference>
<dbReference type="InterPro" id="IPR005225">
    <property type="entry name" value="Small_GTP-bd"/>
</dbReference>
<dbReference type="InterPro" id="IPR000795">
    <property type="entry name" value="T_Tr_GTP-bd_dom"/>
</dbReference>
<dbReference type="InterPro" id="IPR009000">
    <property type="entry name" value="Transl_B-barrel_sf"/>
</dbReference>
<dbReference type="NCBIfam" id="TIGR01393">
    <property type="entry name" value="lepA"/>
    <property type="match status" value="1"/>
</dbReference>
<dbReference type="NCBIfam" id="TIGR00231">
    <property type="entry name" value="small_GTP"/>
    <property type="match status" value="1"/>
</dbReference>
<dbReference type="PANTHER" id="PTHR43512:SF4">
    <property type="entry name" value="TRANSLATION FACTOR GUF1 HOMOLOG, CHLOROPLASTIC"/>
    <property type="match status" value="1"/>
</dbReference>
<dbReference type="PANTHER" id="PTHR43512">
    <property type="entry name" value="TRANSLATION FACTOR GUF1-RELATED"/>
    <property type="match status" value="1"/>
</dbReference>
<dbReference type="Pfam" id="PF00679">
    <property type="entry name" value="EFG_C"/>
    <property type="match status" value="1"/>
</dbReference>
<dbReference type="Pfam" id="PF00009">
    <property type="entry name" value="GTP_EFTU"/>
    <property type="match status" value="1"/>
</dbReference>
<dbReference type="Pfam" id="PF03144">
    <property type="entry name" value="GTP_EFTU_D2"/>
    <property type="match status" value="1"/>
</dbReference>
<dbReference type="Pfam" id="PF06421">
    <property type="entry name" value="LepA_C"/>
    <property type="match status" value="1"/>
</dbReference>
<dbReference type="PRINTS" id="PR00315">
    <property type="entry name" value="ELONGATNFCT"/>
</dbReference>
<dbReference type="SMART" id="SM00838">
    <property type="entry name" value="EFG_C"/>
    <property type="match status" value="1"/>
</dbReference>
<dbReference type="SUPFAM" id="SSF54980">
    <property type="entry name" value="EF-G C-terminal domain-like"/>
    <property type="match status" value="2"/>
</dbReference>
<dbReference type="SUPFAM" id="SSF52540">
    <property type="entry name" value="P-loop containing nucleoside triphosphate hydrolases"/>
    <property type="match status" value="1"/>
</dbReference>
<dbReference type="SUPFAM" id="SSF50447">
    <property type="entry name" value="Translation proteins"/>
    <property type="match status" value="1"/>
</dbReference>
<dbReference type="PROSITE" id="PS00301">
    <property type="entry name" value="G_TR_1"/>
    <property type="match status" value="1"/>
</dbReference>
<dbReference type="PROSITE" id="PS51722">
    <property type="entry name" value="G_TR_2"/>
    <property type="match status" value="1"/>
</dbReference>
<accession>Q5WHG5</accession>
<sequence length="607" mass="68073">MNNDQRLERQSRIRNFSIIAHIDHGKSTLADRILERTGALTDREMKEQALDAMDLERERGITIKLNAVQLKYKAKDGNEYIFHLIDTPGHVDFTYEVSRSLAACEGALLIVDSAQGIEAQTLANVYLALDNDLEILPVINKIDLPSAEPERVKKEVEDVIGLDASDAVLASAKNGIGIEDILEQVVEKVPAPAGDPTAPLKALIFDSLYDPYRGVIAYIRIVEGTVRPGEKIRMMQTGKEFEVNEVGVFTPKAVKCEELTVGDVGFLTAAIKNVSDSRVGDTITSAVNPAQEALPGYRRMNPMVYCGLYPIDTNDYNDLREALERLELNDASLQYEPETSQALGFGFRCGFLGLLHMEIIQERIEREFGISLITTAPSVIYHVTLTDGNTIQIDNPTNMPDPQKMDHVEEPYVKSTVMVPNDYVGAVMELCQSKRGIFVDMQYLDENRVQIIYEIPLSEIVYDFFDQLKSNTKGYASFDYELIGYRQSKLVKMDILLNGEKVDALSVIVHRDSAYERGKVIVEKLKELIPRQQFEVPVQASIGTKIIARSTIKAIRKNVLAKCYGGDISRKRKLLEKQKEGKKRMKAVGNVEIPQEAFMAVLRMDDK</sequence>
<feature type="chain" id="PRO_0000176231" description="Elongation factor 4">
    <location>
        <begin position="1"/>
        <end position="607"/>
    </location>
</feature>
<feature type="domain" description="tr-type G">
    <location>
        <begin position="11"/>
        <end position="193"/>
    </location>
</feature>
<feature type="binding site" evidence="1">
    <location>
        <begin position="23"/>
        <end position="28"/>
    </location>
    <ligand>
        <name>GTP</name>
        <dbReference type="ChEBI" id="CHEBI:37565"/>
    </ligand>
</feature>
<feature type="binding site" evidence="1">
    <location>
        <begin position="140"/>
        <end position="143"/>
    </location>
    <ligand>
        <name>GTP</name>
        <dbReference type="ChEBI" id="CHEBI:37565"/>
    </ligand>
</feature>
<comment type="function">
    <text evidence="1">Required for accurate and efficient protein synthesis under certain stress conditions. May act as a fidelity factor of the translation reaction, by catalyzing a one-codon backward translocation of tRNAs on improperly translocated ribosomes. Back-translocation proceeds from a post-translocation (POST) complex to a pre-translocation (PRE) complex, thus giving elongation factor G a second chance to translocate the tRNAs correctly. Binds to ribosomes in a GTP-dependent manner.</text>
</comment>
<comment type="catalytic activity">
    <reaction evidence="1">
        <text>GTP + H2O = GDP + phosphate + H(+)</text>
        <dbReference type="Rhea" id="RHEA:19669"/>
        <dbReference type="ChEBI" id="CHEBI:15377"/>
        <dbReference type="ChEBI" id="CHEBI:15378"/>
        <dbReference type="ChEBI" id="CHEBI:37565"/>
        <dbReference type="ChEBI" id="CHEBI:43474"/>
        <dbReference type="ChEBI" id="CHEBI:58189"/>
        <dbReference type="EC" id="3.6.5.n1"/>
    </reaction>
</comment>
<comment type="subcellular location">
    <subcellularLocation>
        <location evidence="1">Cell membrane</location>
        <topology evidence="1">Peripheral membrane protein</topology>
        <orientation evidence="1">Cytoplasmic side</orientation>
    </subcellularLocation>
</comment>
<comment type="similarity">
    <text evidence="1">Belongs to the TRAFAC class translation factor GTPase superfamily. Classic translation factor GTPase family. LepA subfamily.</text>
</comment>
<proteinExistence type="inferred from homology"/>